<keyword id="KW-0028">Amino-acid biosynthesis</keyword>
<keyword id="KW-0055">Arginine biosynthesis</keyword>
<keyword id="KW-0963">Cytoplasm</keyword>
<keyword id="KW-0456">Lyase</keyword>
<keyword id="KW-1185">Reference proteome</keyword>
<reference key="1">
    <citation type="journal article" date="2007" name="J. Bacteriol.">
        <title>The complete genome sequence of Roseobacter denitrificans reveals a mixotrophic rather than photosynthetic metabolism.</title>
        <authorList>
            <person name="Swingley W.D."/>
            <person name="Sadekar S."/>
            <person name="Mastrian S.D."/>
            <person name="Matthies H.J."/>
            <person name="Hao J."/>
            <person name="Ramos H."/>
            <person name="Acharya C.R."/>
            <person name="Conrad A.L."/>
            <person name="Taylor H.L."/>
            <person name="Dejesa L.C."/>
            <person name="Shah M.K."/>
            <person name="O'Huallachain M.E."/>
            <person name="Lince M.T."/>
            <person name="Blankenship R.E."/>
            <person name="Beatty J.T."/>
            <person name="Touchman J.W."/>
        </authorList>
    </citation>
    <scope>NUCLEOTIDE SEQUENCE [LARGE SCALE GENOMIC DNA]</scope>
    <source>
        <strain>ATCC 33942 / OCh 114</strain>
    </source>
</reference>
<comment type="catalytic activity">
    <reaction evidence="1">
        <text>2-(N(omega)-L-arginino)succinate = fumarate + L-arginine</text>
        <dbReference type="Rhea" id="RHEA:24020"/>
        <dbReference type="ChEBI" id="CHEBI:29806"/>
        <dbReference type="ChEBI" id="CHEBI:32682"/>
        <dbReference type="ChEBI" id="CHEBI:57472"/>
        <dbReference type="EC" id="4.3.2.1"/>
    </reaction>
</comment>
<comment type="pathway">
    <text evidence="1">Amino-acid biosynthesis; L-arginine biosynthesis; L-arginine from L-ornithine and carbamoyl phosphate: step 3/3.</text>
</comment>
<comment type="subcellular location">
    <subcellularLocation>
        <location evidence="1">Cytoplasm</location>
    </subcellularLocation>
</comment>
<comment type="similarity">
    <text evidence="1">Belongs to the lyase 1 family. Argininosuccinate lyase subfamily.</text>
</comment>
<sequence length="466" mass="50352">MTDTQNPKSSNQMWGGRFADGPDAIMEAINASIGFDKRMAAQDIAGSRAHAAMLGATGIVEPSDAQAMGEGLLTVLSEIEAGNFPFSTALEDIHMNVEARLKEIIGEPAGRLHTGRSRNDQVATDFKLWVRDQLDACEAGLLALIRALLDQAEAGADWVMPGFTHLQTAQPVTWGHHMMAYVEMFGRDLSRVRDARARMNESPLGAAALAGTSFPIDRHMTAQALGFDRPAANSLDAVSDRDFALEFLSTASICAMHLSRFAEELVIWSSAQFRFVALSDRFSTGSSIMPQKKNPDAAELIRAKVGRIFGANTALMMVMKGLPLAYSKDMQEDKEQVFDAADNLMLALAAMTGMVSDMTANRESLAQAAGSGFSTATDLADWLVRVLGLPFREAHHVTGALVALAEAKHCDLPDLTLEDMRGVHAGITGDVFDVLGVENSVQSRISYGGTAPVRVREQIARWRALL</sequence>
<gene>
    <name evidence="1" type="primary">argH</name>
    <name type="ordered locus">RD1_1591</name>
</gene>
<evidence type="ECO:0000255" key="1">
    <source>
        <dbReference type="HAMAP-Rule" id="MF_00006"/>
    </source>
</evidence>
<organism>
    <name type="scientific">Roseobacter denitrificans (strain ATCC 33942 / OCh 114)</name>
    <name type="common">Erythrobacter sp. (strain OCh 114)</name>
    <name type="synonym">Roseobacter denitrificans</name>
    <dbReference type="NCBI Taxonomy" id="375451"/>
    <lineage>
        <taxon>Bacteria</taxon>
        <taxon>Pseudomonadati</taxon>
        <taxon>Pseudomonadota</taxon>
        <taxon>Alphaproteobacteria</taxon>
        <taxon>Rhodobacterales</taxon>
        <taxon>Roseobacteraceae</taxon>
        <taxon>Roseobacter</taxon>
    </lineage>
</organism>
<feature type="chain" id="PRO_0000321451" description="Argininosuccinate lyase">
    <location>
        <begin position="1"/>
        <end position="466"/>
    </location>
</feature>
<accession>Q169X5</accession>
<proteinExistence type="inferred from homology"/>
<dbReference type="EC" id="4.3.2.1" evidence="1"/>
<dbReference type="EMBL" id="CP000362">
    <property type="protein sequence ID" value="ABG31218.1"/>
    <property type="molecule type" value="Genomic_DNA"/>
</dbReference>
<dbReference type="RefSeq" id="WP_011567838.1">
    <property type="nucleotide sequence ID" value="NC_008209.1"/>
</dbReference>
<dbReference type="SMR" id="Q169X5"/>
<dbReference type="STRING" id="375451.RD1_1591"/>
<dbReference type="KEGG" id="rde:RD1_1591"/>
<dbReference type="eggNOG" id="COG0165">
    <property type="taxonomic scope" value="Bacteria"/>
</dbReference>
<dbReference type="HOGENOM" id="CLU_027272_2_3_5"/>
<dbReference type="OrthoDB" id="9769623at2"/>
<dbReference type="UniPathway" id="UPA00068">
    <property type="reaction ID" value="UER00114"/>
</dbReference>
<dbReference type="Proteomes" id="UP000007029">
    <property type="component" value="Chromosome"/>
</dbReference>
<dbReference type="GO" id="GO:0005829">
    <property type="term" value="C:cytosol"/>
    <property type="evidence" value="ECO:0007669"/>
    <property type="project" value="TreeGrafter"/>
</dbReference>
<dbReference type="GO" id="GO:0004056">
    <property type="term" value="F:argininosuccinate lyase activity"/>
    <property type="evidence" value="ECO:0007669"/>
    <property type="project" value="UniProtKB-UniRule"/>
</dbReference>
<dbReference type="GO" id="GO:0042450">
    <property type="term" value="P:arginine biosynthetic process via ornithine"/>
    <property type="evidence" value="ECO:0007669"/>
    <property type="project" value="InterPro"/>
</dbReference>
<dbReference type="GO" id="GO:0006526">
    <property type="term" value="P:L-arginine biosynthetic process"/>
    <property type="evidence" value="ECO:0007669"/>
    <property type="project" value="UniProtKB-UniRule"/>
</dbReference>
<dbReference type="CDD" id="cd01359">
    <property type="entry name" value="Argininosuccinate_lyase"/>
    <property type="match status" value="1"/>
</dbReference>
<dbReference type="FunFam" id="1.10.275.10:FF:000002">
    <property type="entry name" value="Argininosuccinate lyase"/>
    <property type="match status" value="1"/>
</dbReference>
<dbReference type="FunFam" id="1.10.40.30:FF:000001">
    <property type="entry name" value="Argininosuccinate lyase"/>
    <property type="match status" value="1"/>
</dbReference>
<dbReference type="FunFam" id="1.20.200.10:FF:000015">
    <property type="entry name" value="argininosuccinate lyase isoform X2"/>
    <property type="match status" value="1"/>
</dbReference>
<dbReference type="Gene3D" id="1.10.40.30">
    <property type="entry name" value="Fumarase/aspartase (C-terminal domain)"/>
    <property type="match status" value="1"/>
</dbReference>
<dbReference type="Gene3D" id="1.20.200.10">
    <property type="entry name" value="Fumarase/aspartase (Central domain)"/>
    <property type="match status" value="1"/>
</dbReference>
<dbReference type="Gene3D" id="1.10.275.10">
    <property type="entry name" value="Fumarase/aspartase (N-terminal domain)"/>
    <property type="match status" value="1"/>
</dbReference>
<dbReference type="HAMAP" id="MF_00006">
    <property type="entry name" value="Arg_succ_lyase"/>
    <property type="match status" value="1"/>
</dbReference>
<dbReference type="InterPro" id="IPR029419">
    <property type="entry name" value="Arg_succ_lyase_C"/>
</dbReference>
<dbReference type="InterPro" id="IPR009049">
    <property type="entry name" value="Argininosuccinate_lyase"/>
</dbReference>
<dbReference type="InterPro" id="IPR024083">
    <property type="entry name" value="Fumarase/histidase_N"/>
</dbReference>
<dbReference type="InterPro" id="IPR020557">
    <property type="entry name" value="Fumarate_lyase_CS"/>
</dbReference>
<dbReference type="InterPro" id="IPR000362">
    <property type="entry name" value="Fumarate_lyase_fam"/>
</dbReference>
<dbReference type="InterPro" id="IPR022761">
    <property type="entry name" value="Fumarate_lyase_N"/>
</dbReference>
<dbReference type="InterPro" id="IPR008948">
    <property type="entry name" value="L-Aspartase-like"/>
</dbReference>
<dbReference type="NCBIfam" id="TIGR00838">
    <property type="entry name" value="argH"/>
    <property type="match status" value="1"/>
</dbReference>
<dbReference type="PANTHER" id="PTHR43814">
    <property type="entry name" value="ARGININOSUCCINATE LYASE"/>
    <property type="match status" value="1"/>
</dbReference>
<dbReference type="PANTHER" id="PTHR43814:SF1">
    <property type="entry name" value="ARGININOSUCCINATE LYASE"/>
    <property type="match status" value="1"/>
</dbReference>
<dbReference type="Pfam" id="PF14698">
    <property type="entry name" value="ASL_C2"/>
    <property type="match status" value="1"/>
</dbReference>
<dbReference type="Pfam" id="PF00206">
    <property type="entry name" value="Lyase_1"/>
    <property type="match status" value="1"/>
</dbReference>
<dbReference type="PRINTS" id="PR00145">
    <property type="entry name" value="ARGSUCLYASE"/>
</dbReference>
<dbReference type="PRINTS" id="PR00149">
    <property type="entry name" value="FUMRATELYASE"/>
</dbReference>
<dbReference type="SUPFAM" id="SSF48557">
    <property type="entry name" value="L-aspartase-like"/>
    <property type="match status" value="1"/>
</dbReference>
<dbReference type="PROSITE" id="PS00163">
    <property type="entry name" value="FUMARATE_LYASES"/>
    <property type="match status" value="1"/>
</dbReference>
<name>ARLY_ROSDO</name>
<protein>
    <recommendedName>
        <fullName evidence="1">Argininosuccinate lyase</fullName>
        <shortName evidence="1">ASAL</shortName>
        <ecNumber evidence="1">4.3.2.1</ecNumber>
    </recommendedName>
    <alternativeName>
        <fullName evidence="1">Arginosuccinase</fullName>
    </alternativeName>
</protein>